<evidence type="ECO:0000255" key="1">
    <source>
        <dbReference type="HAMAP-Rule" id="MF_00235"/>
    </source>
</evidence>
<sequence length="214" mass="24494">MNIVFLGPPGAGKGTYAKELKEILGIPHISTGDMFREEISAKSELGRKVEDILKRGELVPDDLTNVIVKERLSKPDCKKGFILDGYPRTVAQAKALDEILKKLGRELKFAIYFEVSEDVVVKRISNRRICKNCGKIYNLITLPPKINGKCDVCGGELYQREDDREEVVRRRYKVYMDNTYPVIEYYRKSNKLFTVDGSMDVDSVIKEVLNIIRR</sequence>
<gene>
    <name evidence="1" type="primary">adk</name>
    <name type="ordered locus">Tmel_0974</name>
</gene>
<protein>
    <recommendedName>
        <fullName evidence="1">Adenylate kinase</fullName>
        <shortName evidence="1">AK</shortName>
        <ecNumber evidence="1">2.7.4.3</ecNumber>
    </recommendedName>
    <alternativeName>
        <fullName evidence="1">ATP-AMP transphosphorylase</fullName>
    </alternativeName>
    <alternativeName>
        <fullName evidence="1">ATP:AMP phosphotransferase</fullName>
    </alternativeName>
    <alternativeName>
        <fullName evidence="1">Adenylate monophosphate kinase</fullName>
    </alternativeName>
</protein>
<organism>
    <name type="scientific">Thermosipho melanesiensis (strain DSM 12029 / CIP 104789 / BI429)</name>
    <dbReference type="NCBI Taxonomy" id="391009"/>
    <lineage>
        <taxon>Bacteria</taxon>
        <taxon>Thermotogati</taxon>
        <taxon>Thermotogota</taxon>
        <taxon>Thermotogae</taxon>
        <taxon>Thermotogales</taxon>
        <taxon>Fervidobacteriaceae</taxon>
        <taxon>Thermosipho</taxon>
    </lineage>
</organism>
<keyword id="KW-0067">ATP-binding</keyword>
<keyword id="KW-0963">Cytoplasm</keyword>
<keyword id="KW-0418">Kinase</keyword>
<keyword id="KW-0479">Metal-binding</keyword>
<keyword id="KW-0545">Nucleotide biosynthesis</keyword>
<keyword id="KW-0547">Nucleotide-binding</keyword>
<keyword id="KW-0808">Transferase</keyword>
<keyword id="KW-0862">Zinc</keyword>
<reference key="1">
    <citation type="submission" date="2007-05" db="EMBL/GenBank/DDBJ databases">
        <title>Complete sequence of Thermosipho melanesiensis BI429.</title>
        <authorList>
            <consortium name="US DOE Joint Genome Institute"/>
            <person name="Copeland A."/>
            <person name="Lucas S."/>
            <person name="Lapidus A."/>
            <person name="Barry K."/>
            <person name="Glavina del Rio T."/>
            <person name="Dalin E."/>
            <person name="Tice H."/>
            <person name="Pitluck S."/>
            <person name="Chertkov O."/>
            <person name="Brettin T."/>
            <person name="Bruce D."/>
            <person name="Detter J.C."/>
            <person name="Han C."/>
            <person name="Schmutz J."/>
            <person name="Larimer F."/>
            <person name="Land M."/>
            <person name="Hauser L."/>
            <person name="Kyrpides N."/>
            <person name="Mikhailova N."/>
            <person name="Nelson K."/>
            <person name="Gogarten J.P."/>
            <person name="Noll K."/>
            <person name="Richardson P."/>
        </authorList>
    </citation>
    <scope>NUCLEOTIDE SEQUENCE [LARGE SCALE GENOMIC DNA]</scope>
    <source>
        <strain>DSM 12029 / CIP 104789 / BI429</strain>
    </source>
</reference>
<accession>A6LLN4</accession>
<name>KAD_THEM4</name>
<comment type="function">
    <text evidence="1">Catalyzes the reversible transfer of the terminal phosphate group between ATP and AMP. Plays an important role in cellular energy homeostasis and in adenine nucleotide metabolism.</text>
</comment>
<comment type="catalytic activity">
    <reaction evidence="1">
        <text>AMP + ATP = 2 ADP</text>
        <dbReference type="Rhea" id="RHEA:12973"/>
        <dbReference type="ChEBI" id="CHEBI:30616"/>
        <dbReference type="ChEBI" id="CHEBI:456215"/>
        <dbReference type="ChEBI" id="CHEBI:456216"/>
        <dbReference type="EC" id="2.7.4.3"/>
    </reaction>
</comment>
<comment type="pathway">
    <text evidence="1">Purine metabolism; AMP biosynthesis via salvage pathway; AMP from ADP: step 1/1.</text>
</comment>
<comment type="subunit">
    <text evidence="1">Monomer.</text>
</comment>
<comment type="subcellular location">
    <subcellularLocation>
        <location evidence="1">Cytoplasm</location>
    </subcellularLocation>
</comment>
<comment type="domain">
    <text evidence="1">Consists of three domains, a large central CORE domain and two small peripheral domains, NMPbind and LID, which undergo movements during catalysis. The LID domain closes over the site of phosphoryl transfer upon ATP binding. Assembling and dissambling the active center during each catalytic cycle provides an effective means to prevent ATP hydrolysis. Some bacteria have evolved a zinc-coordinating structure that stabilizes the LID domain.</text>
</comment>
<comment type="similarity">
    <text evidence="1">Belongs to the adenylate kinase family.</text>
</comment>
<proteinExistence type="inferred from homology"/>
<feature type="chain" id="PRO_1000021778" description="Adenylate kinase">
    <location>
        <begin position="1"/>
        <end position="214"/>
    </location>
</feature>
<feature type="region of interest" description="NMP" evidence="1">
    <location>
        <begin position="30"/>
        <end position="59"/>
    </location>
</feature>
<feature type="region of interest" description="LID" evidence="1">
    <location>
        <begin position="126"/>
        <end position="163"/>
    </location>
</feature>
<feature type="binding site" evidence="1">
    <location>
        <begin position="10"/>
        <end position="15"/>
    </location>
    <ligand>
        <name>ATP</name>
        <dbReference type="ChEBI" id="CHEBI:30616"/>
    </ligand>
</feature>
<feature type="binding site" evidence="1">
    <location>
        <position position="31"/>
    </location>
    <ligand>
        <name>AMP</name>
        <dbReference type="ChEBI" id="CHEBI:456215"/>
    </ligand>
</feature>
<feature type="binding site" evidence="1">
    <location>
        <position position="36"/>
    </location>
    <ligand>
        <name>AMP</name>
        <dbReference type="ChEBI" id="CHEBI:456215"/>
    </ligand>
</feature>
<feature type="binding site" evidence="1">
    <location>
        <begin position="57"/>
        <end position="59"/>
    </location>
    <ligand>
        <name>AMP</name>
        <dbReference type="ChEBI" id="CHEBI:456215"/>
    </ligand>
</feature>
<feature type="binding site" evidence="1">
    <location>
        <begin position="85"/>
        <end position="88"/>
    </location>
    <ligand>
        <name>AMP</name>
        <dbReference type="ChEBI" id="CHEBI:456215"/>
    </ligand>
</feature>
<feature type="binding site" evidence="1">
    <location>
        <position position="92"/>
    </location>
    <ligand>
        <name>AMP</name>
        <dbReference type="ChEBI" id="CHEBI:456215"/>
    </ligand>
</feature>
<feature type="binding site" evidence="1">
    <location>
        <position position="127"/>
    </location>
    <ligand>
        <name>ATP</name>
        <dbReference type="ChEBI" id="CHEBI:30616"/>
    </ligand>
</feature>
<feature type="binding site" evidence="1">
    <location>
        <position position="130"/>
    </location>
    <ligand>
        <name>Zn(2+)</name>
        <dbReference type="ChEBI" id="CHEBI:29105"/>
        <note>structural</note>
    </ligand>
</feature>
<feature type="binding site" evidence="1">
    <location>
        <position position="133"/>
    </location>
    <ligand>
        <name>Zn(2+)</name>
        <dbReference type="ChEBI" id="CHEBI:29105"/>
        <note>structural</note>
    </ligand>
</feature>
<feature type="binding site" evidence="1">
    <location>
        <begin position="136"/>
        <end position="137"/>
    </location>
    <ligand>
        <name>ATP</name>
        <dbReference type="ChEBI" id="CHEBI:30616"/>
    </ligand>
</feature>
<feature type="binding site" evidence="1">
    <location>
        <position position="150"/>
    </location>
    <ligand>
        <name>Zn(2+)</name>
        <dbReference type="ChEBI" id="CHEBI:29105"/>
        <note>structural</note>
    </ligand>
</feature>
<feature type="binding site" evidence="1">
    <location>
        <position position="153"/>
    </location>
    <ligand>
        <name>Zn(2+)</name>
        <dbReference type="ChEBI" id="CHEBI:29105"/>
        <note>structural</note>
    </ligand>
</feature>
<feature type="binding site" evidence="1">
    <location>
        <position position="160"/>
    </location>
    <ligand>
        <name>AMP</name>
        <dbReference type="ChEBI" id="CHEBI:456215"/>
    </ligand>
</feature>
<feature type="binding site" evidence="1">
    <location>
        <position position="171"/>
    </location>
    <ligand>
        <name>AMP</name>
        <dbReference type="ChEBI" id="CHEBI:456215"/>
    </ligand>
</feature>
<feature type="binding site" evidence="1">
    <location>
        <position position="199"/>
    </location>
    <ligand>
        <name>ATP</name>
        <dbReference type="ChEBI" id="CHEBI:30616"/>
    </ligand>
</feature>
<dbReference type="EC" id="2.7.4.3" evidence="1"/>
<dbReference type="EMBL" id="CP000716">
    <property type="protein sequence ID" value="ABR30835.1"/>
    <property type="molecule type" value="Genomic_DNA"/>
</dbReference>
<dbReference type="RefSeq" id="WP_012057196.1">
    <property type="nucleotide sequence ID" value="NC_009616.1"/>
</dbReference>
<dbReference type="SMR" id="A6LLN4"/>
<dbReference type="STRING" id="391009.Tmel_0974"/>
<dbReference type="KEGG" id="tme:Tmel_0974"/>
<dbReference type="eggNOG" id="COG0563">
    <property type="taxonomic scope" value="Bacteria"/>
</dbReference>
<dbReference type="HOGENOM" id="CLU_032354_1_2_0"/>
<dbReference type="OrthoDB" id="9805030at2"/>
<dbReference type="UniPathway" id="UPA00588">
    <property type="reaction ID" value="UER00649"/>
</dbReference>
<dbReference type="Proteomes" id="UP000001110">
    <property type="component" value="Chromosome"/>
</dbReference>
<dbReference type="GO" id="GO:0005737">
    <property type="term" value="C:cytoplasm"/>
    <property type="evidence" value="ECO:0007669"/>
    <property type="project" value="UniProtKB-SubCell"/>
</dbReference>
<dbReference type="GO" id="GO:0004017">
    <property type="term" value="F:adenylate kinase activity"/>
    <property type="evidence" value="ECO:0007669"/>
    <property type="project" value="UniProtKB-UniRule"/>
</dbReference>
<dbReference type="GO" id="GO:0005524">
    <property type="term" value="F:ATP binding"/>
    <property type="evidence" value="ECO:0007669"/>
    <property type="project" value="UniProtKB-UniRule"/>
</dbReference>
<dbReference type="GO" id="GO:0008270">
    <property type="term" value="F:zinc ion binding"/>
    <property type="evidence" value="ECO:0007669"/>
    <property type="project" value="UniProtKB-UniRule"/>
</dbReference>
<dbReference type="GO" id="GO:0044209">
    <property type="term" value="P:AMP salvage"/>
    <property type="evidence" value="ECO:0007669"/>
    <property type="project" value="UniProtKB-UniRule"/>
</dbReference>
<dbReference type="CDD" id="cd01428">
    <property type="entry name" value="ADK"/>
    <property type="match status" value="1"/>
</dbReference>
<dbReference type="FunFam" id="3.40.50.300:FF:000106">
    <property type="entry name" value="Adenylate kinase mitochondrial"/>
    <property type="match status" value="1"/>
</dbReference>
<dbReference type="Gene3D" id="3.40.50.300">
    <property type="entry name" value="P-loop containing nucleotide triphosphate hydrolases"/>
    <property type="match status" value="1"/>
</dbReference>
<dbReference type="HAMAP" id="MF_00235">
    <property type="entry name" value="Adenylate_kinase_Adk"/>
    <property type="match status" value="1"/>
</dbReference>
<dbReference type="InterPro" id="IPR006259">
    <property type="entry name" value="Adenyl_kin_sub"/>
</dbReference>
<dbReference type="InterPro" id="IPR000850">
    <property type="entry name" value="Adenylat/UMP-CMP_kin"/>
</dbReference>
<dbReference type="InterPro" id="IPR033690">
    <property type="entry name" value="Adenylat_kinase_CS"/>
</dbReference>
<dbReference type="InterPro" id="IPR007862">
    <property type="entry name" value="Adenylate_kinase_lid-dom"/>
</dbReference>
<dbReference type="InterPro" id="IPR027417">
    <property type="entry name" value="P-loop_NTPase"/>
</dbReference>
<dbReference type="NCBIfam" id="TIGR01351">
    <property type="entry name" value="adk"/>
    <property type="match status" value="1"/>
</dbReference>
<dbReference type="NCBIfam" id="NF001380">
    <property type="entry name" value="PRK00279.1-2"/>
    <property type="match status" value="1"/>
</dbReference>
<dbReference type="NCBIfam" id="NF001381">
    <property type="entry name" value="PRK00279.1-3"/>
    <property type="match status" value="1"/>
</dbReference>
<dbReference type="NCBIfam" id="NF001386">
    <property type="entry name" value="PRK00279.2-4"/>
    <property type="match status" value="1"/>
</dbReference>
<dbReference type="NCBIfam" id="NF011099">
    <property type="entry name" value="PRK14526.1"/>
    <property type="match status" value="1"/>
</dbReference>
<dbReference type="NCBIfam" id="NF011100">
    <property type="entry name" value="PRK14527.1"/>
    <property type="match status" value="1"/>
</dbReference>
<dbReference type="PANTHER" id="PTHR23359">
    <property type="entry name" value="NUCLEOTIDE KINASE"/>
    <property type="match status" value="1"/>
</dbReference>
<dbReference type="Pfam" id="PF00406">
    <property type="entry name" value="ADK"/>
    <property type="match status" value="1"/>
</dbReference>
<dbReference type="Pfam" id="PF05191">
    <property type="entry name" value="ADK_lid"/>
    <property type="match status" value="1"/>
</dbReference>
<dbReference type="PRINTS" id="PR00094">
    <property type="entry name" value="ADENYLTKNASE"/>
</dbReference>
<dbReference type="SUPFAM" id="SSF52540">
    <property type="entry name" value="P-loop containing nucleoside triphosphate hydrolases"/>
    <property type="match status" value="1"/>
</dbReference>
<dbReference type="PROSITE" id="PS00113">
    <property type="entry name" value="ADENYLATE_KINASE"/>
    <property type="match status" value="1"/>
</dbReference>